<accession>P0A706</accession>
<accession>O32548</accession>
<accession>O32549</accession>
<accession>O32550</accession>
<accession>O34379</accession>
<accession>O34415</accession>
<accession>O34603</accession>
<accession>P02995</accession>
<accession>Q9EUZ4</accession>
<accession>Q9EUZ5</accession>
<accession>Q9EUZ6</accession>
<accession>Q9EUZ8</accession>
<accession>Q9EUZ9</accession>
<accession>Q9EV00</accession>
<evidence type="ECO:0000250" key="1"/>
<evidence type="ECO:0000256" key="2">
    <source>
        <dbReference type="SAM" id="MobiDB-lite"/>
    </source>
</evidence>
<evidence type="ECO:0000305" key="3"/>
<sequence length="890" mass="97350">MTDVTIKTLAAERQTSVERLVQQFADAGIRKSADDSVSAQEKQTLIDHLNQKNSGPDKLTLQRKTRSTLNIPGTGGKSKSVQIEVRKKRTFVKRDPQEAERLAAEEQAQREAEEQARREAEESAKREAQQKAEREAAEQAKREAAEQAKREAAEKDKVSNQQDDMTKNAQAEKARREQEAAELKRKAEEEARRKLEEEARRVAEEARRMAEENKWTDNAEPTEDSSDYHVTTSQHARQAEDESDREVEGGRGRGRNAKAARPKKGNKHAESKADREEARAAVRGGKGGKRKGSSLQQGFQKPAQAVNRDVVIGETITVGELANKMAVKGSQVIKAMMKLGAMATINQVIDQETAQLVAEEMGHKVILRRENELEEAVMSDRDTGAAAEPRAPVVTIMGHVDHGKTSLLDYIRSTKVASGEAGGITQHIGAYHVETENGMITFLDTPGHAAFTSMRARGAQATDIVVLVVAADDGVMPQTIEAIQHAKAAQVPVVVAVNKIDKPEADPDRVKNELSQYGILPEEWGGESQFVHVSAKAGTGIDELLDAILLQAEVLELKAVRKGMASGAVIESFLDKGRGPVATVLVREGTLHKGDIVLCGFEYGRVRAMRNELGQEVLEAGPSIPVEILGLSGVPAAGDEVTVVRDEKKAREVALYRQGKFREVKLARQQKSKLENMFANMTEGEVHEVNIVLKADVQGSVEAISDSLLKLSTDEVKVKIIGSGVGGITETDATLAAASNAILVGFNVRADASARKVIEAESLDLRYYSVIYNLIDEVKAAMSGMLSPELKQQIIGLAEVRDVFKSPKFGAIAGCMVTEGVVKRHNPIRVLRDNVVIYEGELESLRRFKDDVNEVRNGMECGIGVKNYNDVRTGDVIEVFEIIEIQRTIA</sequence>
<keyword id="KW-0007">Acetylation</keyword>
<keyword id="KW-0963">Cytoplasm</keyword>
<keyword id="KW-0342">GTP-binding</keyword>
<keyword id="KW-0396">Initiation factor</keyword>
<keyword id="KW-0547">Nucleotide-binding</keyword>
<keyword id="KW-0648">Protein biosynthesis</keyword>
<keyword id="KW-1185">Reference proteome</keyword>
<gene>
    <name type="primary">infB</name>
    <name type="ordered locus">Z4529</name>
    <name type="ordered locus">ECs4049</name>
</gene>
<protein>
    <recommendedName>
        <fullName>Translation initiation factor IF-2</fullName>
    </recommendedName>
</protein>
<dbReference type="EMBL" id="AE005174">
    <property type="protein sequence ID" value="AAG58304.1"/>
    <property type="molecule type" value="Genomic_DNA"/>
</dbReference>
<dbReference type="EMBL" id="BA000007">
    <property type="protein sequence ID" value="BAB37472.1"/>
    <property type="molecule type" value="Genomic_DNA"/>
</dbReference>
<dbReference type="PIR" id="A91135">
    <property type="entry name" value="A91135"/>
</dbReference>
<dbReference type="RefSeq" id="NP_312076.1">
    <property type="nucleotide sequence ID" value="NC_002695.1"/>
</dbReference>
<dbReference type="RefSeq" id="WP_000133044.1">
    <property type="nucleotide sequence ID" value="NZ_VOAI01000014.1"/>
</dbReference>
<dbReference type="SMR" id="P0A706"/>
<dbReference type="STRING" id="155864.Z4529"/>
<dbReference type="GeneID" id="75206024"/>
<dbReference type="GeneID" id="916116"/>
<dbReference type="KEGG" id="ece:Z4529"/>
<dbReference type="KEGG" id="ecs:ECs_4049"/>
<dbReference type="PATRIC" id="fig|386585.9.peg.4228"/>
<dbReference type="eggNOG" id="COG0532">
    <property type="taxonomic scope" value="Bacteria"/>
</dbReference>
<dbReference type="HOGENOM" id="CLU_006301_6_3_6"/>
<dbReference type="OMA" id="RKNPWMN"/>
<dbReference type="Proteomes" id="UP000000558">
    <property type="component" value="Chromosome"/>
</dbReference>
<dbReference type="Proteomes" id="UP000002519">
    <property type="component" value="Chromosome"/>
</dbReference>
<dbReference type="GO" id="GO:0005829">
    <property type="term" value="C:cytosol"/>
    <property type="evidence" value="ECO:0007669"/>
    <property type="project" value="TreeGrafter"/>
</dbReference>
<dbReference type="GO" id="GO:0005525">
    <property type="term" value="F:GTP binding"/>
    <property type="evidence" value="ECO:0007669"/>
    <property type="project" value="UniProtKB-KW"/>
</dbReference>
<dbReference type="GO" id="GO:0003924">
    <property type="term" value="F:GTPase activity"/>
    <property type="evidence" value="ECO:0007669"/>
    <property type="project" value="UniProtKB-UniRule"/>
</dbReference>
<dbReference type="GO" id="GO:0097216">
    <property type="term" value="F:guanosine tetraphosphate binding"/>
    <property type="evidence" value="ECO:0007669"/>
    <property type="project" value="UniProtKB-ARBA"/>
</dbReference>
<dbReference type="GO" id="GO:0003743">
    <property type="term" value="F:translation initiation factor activity"/>
    <property type="evidence" value="ECO:0007669"/>
    <property type="project" value="UniProtKB-UniRule"/>
</dbReference>
<dbReference type="CDD" id="cd01887">
    <property type="entry name" value="IF2_eIF5B"/>
    <property type="match status" value="1"/>
</dbReference>
<dbReference type="CDD" id="cd03702">
    <property type="entry name" value="IF2_mtIF2_II"/>
    <property type="match status" value="1"/>
</dbReference>
<dbReference type="CDD" id="cd03692">
    <property type="entry name" value="mtIF2_IVc"/>
    <property type="match status" value="1"/>
</dbReference>
<dbReference type="FunFam" id="2.40.30.10:FF:000007">
    <property type="entry name" value="Translation initiation factor IF-2"/>
    <property type="match status" value="1"/>
</dbReference>
<dbReference type="FunFam" id="2.40.30.10:FF:000008">
    <property type="entry name" value="Translation initiation factor IF-2"/>
    <property type="match status" value="1"/>
</dbReference>
<dbReference type="FunFam" id="3.30.56.50:FF:000001">
    <property type="entry name" value="Translation initiation factor IF-2"/>
    <property type="match status" value="1"/>
</dbReference>
<dbReference type="FunFam" id="3.40.50.10050:FF:000001">
    <property type="entry name" value="Translation initiation factor IF-2"/>
    <property type="match status" value="1"/>
</dbReference>
<dbReference type="FunFam" id="3.40.50.300:FF:000019">
    <property type="entry name" value="Translation initiation factor IF-2"/>
    <property type="match status" value="1"/>
</dbReference>
<dbReference type="Gene3D" id="3.40.50.300">
    <property type="entry name" value="P-loop containing nucleotide triphosphate hydrolases"/>
    <property type="match status" value="1"/>
</dbReference>
<dbReference type="Gene3D" id="3.30.56.50">
    <property type="entry name" value="Putative DNA-binding domain, N-terminal subdomain of bacterial translation initiation factor IF2"/>
    <property type="match status" value="1"/>
</dbReference>
<dbReference type="Gene3D" id="2.40.30.10">
    <property type="entry name" value="Translation factors"/>
    <property type="match status" value="2"/>
</dbReference>
<dbReference type="Gene3D" id="3.40.50.10050">
    <property type="entry name" value="Translation initiation factor IF- 2, domain 3"/>
    <property type="match status" value="1"/>
</dbReference>
<dbReference type="HAMAP" id="MF_00100_B">
    <property type="entry name" value="IF_2_B"/>
    <property type="match status" value="1"/>
</dbReference>
<dbReference type="InterPro" id="IPR009061">
    <property type="entry name" value="DNA-bd_dom_put_sf"/>
</dbReference>
<dbReference type="InterPro" id="IPR053905">
    <property type="entry name" value="EF-G-like_DII"/>
</dbReference>
<dbReference type="InterPro" id="IPR004161">
    <property type="entry name" value="EFTu-like_2"/>
</dbReference>
<dbReference type="InterPro" id="IPR013575">
    <property type="entry name" value="IF2_assoc_dom_bac"/>
</dbReference>
<dbReference type="InterPro" id="IPR044145">
    <property type="entry name" value="IF2_II"/>
</dbReference>
<dbReference type="InterPro" id="IPR006847">
    <property type="entry name" value="IF2_N"/>
</dbReference>
<dbReference type="InterPro" id="IPR027417">
    <property type="entry name" value="P-loop_NTPase"/>
</dbReference>
<dbReference type="InterPro" id="IPR005225">
    <property type="entry name" value="Small_GTP-bd"/>
</dbReference>
<dbReference type="InterPro" id="IPR000795">
    <property type="entry name" value="T_Tr_GTP-bd_dom"/>
</dbReference>
<dbReference type="InterPro" id="IPR000178">
    <property type="entry name" value="TF_IF2_bacterial-like"/>
</dbReference>
<dbReference type="InterPro" id="IPR015760">
    <property type="entry name" value="TIF_IF2"/>
</dbReference>
<dbReference type="InterPro" id="IPR023115">
    <property type="entry name" value="TIF_IF2_dom3"/>
</dbReference>
<dbReference type="InterPro" id="IPR036925">
    <property type="entry name" value="TIF_IF2_dom3_sf"/>
</dbReference>
<dbReference type="InterPro" id="IPR009000">
    <property type="entry name" value="Transl_B-barrel_sf"/>
</dbReference>
<dbReference type="NCBIfam" id="TIGR00487">
    <property type="entry name" value="IF-2"/>
    <property type="match status" value="1"/>
</dbReference>
<dbReference type="NCBIfam" id="TIGR00231">
    <property type="entry name" value="small_GTP"/>
    <property type="match status" value="1"/>
</dbReference>
<dbReference type="PANTHER" id="PTHR43381:SF5">
    <property type="entry name" value="TR-TYPE G DOMAIN-CONTAINING PROTEIN"/>
    <property type="match status" value="1"/>
</dbReference>
<dbReference type="PANTHER" id="PTHR43381">
    <property type="entry name" value="TRANSLATION INITIATION FACTOR IF-2-RELATED"/>
    <property type="match status" value="1"/>
</dbReference>
<dbReference type="Pfam" id="PF22042">
    <property type="entry name" value="EF-G_D2"/>
    <property type="match status" value="1"/>
</dbReference>
<dbReference type="Pfam" id="PF00009">
    <property type="entry name" value="GTP_EFTU"/>
    <property type="match status" value="1"/>
</dbReference>
<dbReference type="Pfam" id="PF03144">
    <property type="entry name" value="GTP_EFTU_D2"/>
    <property type="match status" value="1"/>
</dbReference>
<dbReference type="Pfam" id="PF11987">
    <property type="entry name" value="IF-2"/>
    <property type="match status" value="1"/>
</dbReference>
<dbReference type="Pfam" id="PF08364">
    <property type="entry name" value="IF2_assoc"/>
    <property type="match status" value="1"/>
</dbReference>
<dbReference type="Pfam" id="PF04760">
    <property type="entry name" value="IF2_N"/>
    <property type="match status" value="2"/>
</dbReference>
<dbReference type="SUPFAM" id="SSF52156">
    <property type="entry name" value="Initiation factor IF2/eIF5b, domain 3"/>
    <property type="match status" value="1"/>
</dbReference>
<dbReference type="SUPFAM" id="SSF52540">
    <property type="entry name" value="P-loop containing nucleoside triphosphate hydrolases"/>
    <property type="match status" value="1"/>
</dbReference>
<dbReference type="SUPFAM" id="SSF46955">
    <property type="entry name" value="Putative DNA-binding domain"/>
    <property type="match status" value="1"/>
</dbReference>
<dbReference type="SUPFAM" id="SSF50447">
    <property type="entry name" value="Translation proteins"/>
    <property type="match status" value="2"/>
</dbReference>
<dbReference type="PROSITE" id="PS51722">
    <property type="entry name" value="G_TR_2"/>
    <property type="match status" value="1"/>
</dbReference>
<dbReference type="PROSITE" id="PS01176">
    <property type="entry name" value="IF2"/>
    <property type="match status" value="1"/>
</dbReference>
<name>IF2_ECO57</name>
<comment type="function">
    <text evidence="1">One of the essential components for the initiation of protein synthesis. Protects formylmethionyl-tRNA from spontaneous hydrolysis and promotes its binding to the 30S ribosomal subunits. Also involved in the hydrolysis of GTP during the formation of the 70S ribosomal complex (By similarity).</text>
</comment>
<comment type="subcellular location">
    <subcellularLocation>
        <location evidence="1">Cytoplasm</location>
    </subcellularLocation>
</comment>
<comment type="similarity">
    <text evidence="3">Belongs to the TRAFAC class translation factor GTPase superfamily. Classic translation factor GTPase family. IF-2 subfamily.</text>
</comment>
<feature type="chain" id="PRO_0000137200" description="Translation initiation factor IF-2">
    <location>
        <begin position="1"/>
        <end position="890"/>
    </location>
</feature>
<feature type="domain" description="tr-type G">
    <location>
        <begin position="389"/>
        <end position="558"/>
    </location>
</feature>
<feature type="region of interest" description="1">
    <location>
        <begin position="1"/>
        <end position="103"/>
    </location>
</feature>
<feature type="region of interest" description="Disordered" evidence="2">
    <location>
        <begin position="45"/>
        <end position="304"/>
    </location>
</feature>
<feature type="region of interest" description="2">
    <location>
        <begin position="104"/>
        <end position="287"/>
    </location>
</feature>
<feature type="region of interest" description="3">
    <location>
        <begin position="288"/>
        <end position="391"/>
    </location>
</feature>
<feature type="region of interest" description="G1" evidence="1">
    <location>
        <begin position="398"/>
        <end position="405"/>
    </location>
</feature>
<feature type="region of interest" description="G2" evidence="1">
    <location>
        <begin position="423"/>
        <end position="427"/>
    </location>
</feature>
<feature type="region of interest" description="G3" evidence="1">
    <location>
        <begin position="444"/>
        <end position="447"/>
    </location>
</feature>
<feature type="region of interest" description="G4" evidence="1">
    <location>
        <begin position="498"/>
        <end position="501"/>
    </location>
</feature>
<feature type="region of interest" description="G5" evidence="1">
    <location>
        <begin position="534"/>
        <end position="536"/>
    </location>
</feature>
<feature type="region of interest" description="5">
    <location>
        <begin position="541"/>
        <end position="668"/>
    </location>
</feature>
<feature type="region of interest" description="6">
    <location>
        <begin position="669"/>
        <end position="890"/>
    </location>
</feature>
<feature type="compositionally biased region" description="Polar residues" evidence="2">
    <location>
        <begin position="67"/>
        <end position="81"/>
    </location>
</feature>
<feature type="compositionally biased region" description="Basic and acidic residues" evidence="2">
    <location>
        <begin position="92"/>
        <end position="217"/>
    </location>
</feature>
<feature type="compositionally biased region" description="Basic residues" evidence="2">
    <location>
        <begin position="252"/>
        <end position="266"/>
    </location>
</feature>
<feature type="compositionally biased region" description="Basic and acidic residues" evidence="2">
    <location>
        <begin position="267"/>
        <end position="280"/>
    </location>
</feature>
<feature type="binding site" evidence="1">
    <location>
        <begin position="398"/>
        <end position="405"/>
    </location>
    <ligand>
        <name>GTP</name>
        <dbReference type="ChEBI" id="CHEBI:37565"/>
    </ligand>
</feature>
<feature type="binding site" evidence="1">
    <location>
        <begin position="444"/>
        <end position="448"/>
    </location>
    <ligand>
        <name>GTP</name>
        <dbReference type="ChEBI" id="CHEBI:37565"/>
    </ligand>
</feature>
<feature type="binding site" evidence="1">
    <location>
        <begin position="498"/>
        <end position="501"/>
    </location>
    <ligand>
        <name>GTP</name>
        <dbReference type="ChEBI" id="CHEBI:37565"/>
    </ligand>
</feature>
<feature type="modified residue" description="N6-acetyllysine" evidence="1">
    <location>
        <position position="808"/>
    </location>
</feature>
<reference key="1">
    <citation type="journal article" date="2001" name="Nature">
        <title>Genome sequence of enterohaemorrhagic Escherichia coli O157:H7.</title>
        <authorList>
            <person name="Perna N.T."/>
            <person name="Plunkett G. III"/>
            <person name="Burland V."/>
            <person name="Mau B."/>
            <person name="Glasner J.D."/>
            <person name="Rose D.J."/>
            <person name="Mayhew G.F."/>
            <person name="Evans P.S."/>
            <person name="Gregor J."/>
            <person name="Kirkpatrick H.A."/>
            <person name="Posfai G."/>
            <person name="Hackett J."/>
            <person name="Klink S."/>
            <person name="Boutin A."/>
            <person name="Shao Y."/>
            <person name="Miller L."/>
            <person name="Grotbeck E.J."/>
            <person name="Davis N.W."/>
            <person name="Lim A."/>
            <person name="Dimalanta E.T."/>
            <person name="Potamousis K."/>
            <person name="Apodaca J."/>
            <person name="Anantharaman T.S."/>
            <person name="Lin J."/>
            <person name="Yen G."/>
            <person name="Schwartz D.C."/>
            <person name="Welch R.A."/>
            <person name="Blattner F.R."/>
        </authorList>
    </citation>
    <scope>NUCLEOTIDE SEQUENCE [LARGE SCALE GENOMIC DNA]</scope>
    <source>
        <strain>O157:H7 / EDL933 / ATCC 700927 / EHEC</strain>
    </source>
</reference>
<reference key="2">
    <citation type="journal article" date="2001" name="DNA Res.">
        <title>Complete genome sequence of enterohemorrhagic Escherichia coli O157:H7 and genomic comparison with a laboratory strain K-12.</title>
        <authorList>
            <person name="Hayashi T."/>
            <person name="Makino K."/>
            <person name="Ohnishi M."/>
            <person name="Kurokawa K."/>
            <person name="Ishii K."/>
            <person name="Yokoyama K."/>
            <person name="Han C.-G."/>
            <person name="Ohtsubo E."/>
            <person name="Nakayama K."/>
            <person name="Murata T."/>
            <person name="Tanaka M."/>
            <person name="Tobe T."/>
            <person name="Iida T."/>
            <person name="Takami H."/>
            <person name="Honda T."/>
            <person name="Sasakawa C."/>
            <person name="Ogasawara N."/>
            <person name="Yasunaga T."/>
            <person name="Kuhara S."/>
            <person name="Shiba T."/>
            <person name="Hattori M."/>
            <person name="Shinagawa H."/>
        </authorList>
    </citation>
    <scope>NUCLEOTIDE SEQUENCE [LARGE SCALE GENOMIC DNA]</scope>
    <source>
        <strain>O157:H7 / Sakai / RIMD 0509952 / EHEC</strain>
    </source>
</reference>
<organism>
    <name type="scientific">Escherichia coli O157:H7</name>
    <dbReference type="NCBI Taxonomy" id="83334"/>
    <lineage>
        <taxon>Bacteria</taxon>
        <taxon>Pseudomonadati</taxon>
        <taxon>Pseudomonadota</taxon>
        <taxon>Gammaproteobacteria</taxon>
        <taxon>Enterobacterales</taxon>
        <taxon>Enterobacteriaceae</taxon>
        <taxon>Escherichia</taxon>
    </lineage>
</organism>
<proteinExistence type="inferred from homology"/>